<name>GREA_CLONN</name>
<feature type="chain" id="PRO_1000034256" description="Transcription elongation factor GreA">
    <location>
        <begin position="1"/>
        <end position="159"/>
    </location>
</feature>
<feature type="coiled-coil region" evidence="1">
    <location>
        <begin position="14"/>
        <end position="76"/>
    </location>
</feature>
<keyword id="KW-0175">Coiled coil</keyword>
<keyword id="KW-0238">DNA-binding</keyword>
<keyword id="KW-1185">Reference proteome</keyword>
<keyword id="KW-0804">Transcription</keyword>
<keyword id="KW-0805">Transcription regulation</keyword>
<evidence type="ECO:0000255" key="1">
    <source>
        <dbReference type="HAMAP-Rule" id="MF_00105"/>
    </source>
</evidence>
<protein>
    <recommendedName>
        <fullName evidence="1">Transcription elongation factor GreA</fullName>
    </recommendedName>
    <alternativeName>
        <fullName evidence="1">Transcript cleavage factor GreA</fullName>
    </alternativeName>
</protein>
<comment type="function">
    <text evidence="1">Necessary for efficient RNA polymerase transcription elongation past template-encoded arresting sites. The arresting sites in DNA have the property of trapping a certain fraction of elongating RNA polymerases that pass through, resulting in locked ternary complexes. Cleavage of the nascent transcript by cleavage factors such as GreA or GreB allows the resumption of elongation from the new 3'terminus. GreA releases sequences of 2 to 3 nucleotides.</text>
</comment>
<comment type="similarity">
    <text evidence="1">Belongs to the GreA/GreB family.</text>
</comment>
<organism>
    <name type="scientific">Clostridium novyi (strain NT)</name>
    <dbReference type="NCBI Taxonomy" id="386415"/>
    <lineage>
        <taxon>Bacteria</taxon>
        <taxon>Bacillati</taxon>
        <taxon>Bacillota</taxon>
        <taxon>Clostridia</taxon>
        <taxon>Eubacteriales</taxon>
        <taxon>Clostridiaceae</taxon>
        <taxon>Clostridium</taxon>
    </lineage>
</organism>
<sequence>MSDSKQYIMTAEGVKKLEEELEYLKTVKRREITEKIKVALSYGDLSENSEYDEAKNEQAFVEGRIVQLENMLRNANVVDESEISLDAVSVGSIVKVKDYDFDEIIDFHIVGSAEADPMENKISNESPVGSALIGKKVGDVINVPVPDGISKFEILEIRV</sequence>
<dbReference type="EMBL" id="CP000382">
    <property type="protein sequence ID" value="ABK62143.1"/>
    <property type="molecule type" value="Genomic_DNA"/>
</dbReference>
<dbReference type="RefSeq" id="WP_011721156.1">
    <property type="nucleotide sequence ID" value="NC_008593.1"/>
</dbReference>
<dbReference type="SMR" id="A0PXN3"/>
<dbReference type="STRING" id="386415.NT01CX_1045"/>
<dbReference type="KEGG" id="cno:NT01CX_1045"/>
<dbReference type="PATRIC" id="fig|386415.7.peg.161"/>
<dbReference type="eggNOG" id="COG0782">
    <property type="taxonomic scope" value="Bacteria"/>
</dbReference>
<dbReference type="HOGENOM" id="CLU_101379_2_1_9"/>
<dbReference type="Proteomes" id="UP000008220">
    <property type="component" value="Chromosome"/>
</dbReference>
<dbReference type="GO" id="GO:0003677">
    <property type="term" value="F:DNA binding"/>
    <property type="evidence" value="ECO:0007669"/>
    <property type="project" value="UniProtKB-UniRule"/>
</dbReference>
<dbReference type="GO" id="GO:0070063">
    <property type="term" value="F:RNA polymerase binding"/>
    <property type="evidence" value="ECO:0007669"/>
    <property type="project" value="InterPro"/>
</dbReference>
<dbReference type="GO" id="GO:0006354">
    <property type="term" value="P:DNA-templated transcription elongation"/>
    <property type="evidence" value="ECO:0007669"/>
    <property type="project" value="TreeGrafter"/>
</dbReference>
<dbReference type="GO" id="GO:0032784">
    <property type="term" value="P:regulation of DNA-templated transcription elongation"/>
    <property type="evidence" value="ECO:0007669"/>
    <property type="project" value="UniProtKB-UniRule"/>
</dbReference>
<dbReference type="FunFam" id="1.10.287.180:FF:000001">
    <property type="entry name" value="Transcription elongation factor GreA"/>
    <property type="match status" value="1"/>
</dbReference>
<dbReference type="FunFam" id="3.10.50.30:FF:000001">
    <property type="entry name" value="Transcription elongation factor GreA"/>
    <property type="match status" value="1"/>
</dbReference>
<dbReference type="Gene3D" id="3.10.50.30">
    <property type="entry name" value="Transcription elongation factor, GreA/GreB, C-terminal domain"/>
    <property type="match status" value="1"/>
</dbReference>
<dbReference type="Gene3D" id="1.10.287.180">
    <property type="entry name" value="Transcription elongation factor, GreA/GreB, N-terminal domain"/>
    <property type="match status" value="1"/>
</dbReference>
<dbReference type="HAMAP" id="MF_00105">
    <property type="entry name" value="GreA_GreB"/>
    <property type="match status" value="1"/>
</dbReference>
<dbReference type="InterPro" id="IPR036953">
    <property type="entry name" value="GreA/GreB_C_sf"/>
</dbReference>
<dbReference type="InterPro" id="IPR018151">
    <property type="entry name" value="TF_GreA/GreB_CS"/>
</dbReference>
<dbReference type="InterPro" id="IPR006359">
    <property type="entry name" value="Tscrpt_elong_fac_GreA"/>
</dbReference>
<dbReference type="InterPro" id="IPR028624">
    <property type="entry name" value="Tscrpt_elong_fac_GreA/B"/>
</dbReference>
<dbReference type="InterPro" id="IPR001437">
    <property type="entry name" value="Tscrpt_elong_fac_GreA/B_C"/>
</dbReference>
<dbReference type="InterPro" id="IPR023459">
    <property type="entry name" value="Tscrpt_elong_fac_GreA/B_fam"/>
</dbReference>
<dbReference type="InterPro" id="IPR022691">
    <property type="entry name" value="Tscrpt_elong_fac_GreA/B_N"/>
</dbReference>
<dbReference type="InterPro" id="IPR036805">
    <property type="entry name" value="Tscrpt_elong_fac_GreA/B_N_sf"/>
</dbReference>
<dbReference type="NCBIfam" id="TIGR01462">
    <property type="entry name" value="greA"/>
    <property type="match status" value="1"/>
</dbReference>
<dbReference type="NCBIfam" id="NF001261">
    <property type="entry name" value="PRK00226.1-2"/>
    <property type="match status" value="1"/>
</dbReference>
<dbReference type="NCBIfam" id="NF001263">
    <property type="entry name" value="PRK00226.1-4"/>
    <property type="match status" value="1"/>
</dbReference>
<dbReference type="PANTHER" id="PTHR30437">
    <property type="entry name" value="TRANSCRIPTION ELONGATION FACTOR GREA"/>
    <property type="match status" value="1"/>
</dbReference>
<dbReference type="PANTHER" id="PTHR30437:SF4">
    <property type="entry name" value="TRANSCRIPTION ELONGATION FACTOR GREA"/>
    <property type="match status" value="1"/>
</dbReference>
<dbReference type="Pfam" id="PF01272">
    <property type="entry name" value="GreA_GreB"/>
    <property type="match status" value="1"/>
</dbReference>
<dbReference type="Pfam" id="PF03449">
    <property type="entry name" value="GreA_GreB_N"/>
    <property type="match status" value="1"/>
</dbReference>
<dbReference type="PIRSF" id="PIRSF006092">
    <property type="entry name" value="GreA_GreB"/>
    <property type="match status" value="1"/>
</dbReference>
<dbReference type="SUPFAM" id="SSF54534">
    <property type="entry name" value="FKBP-like"/>
    <property type="match status" value="1"/>
</dbReference>
<dbReference type="SUPFAM" id="SSF46557">
    <property type="entry name" value="GreA transcript cleavage protein, N-terminal domain"/>
    <property type="match status" value="1"/>
</dbReference>
<dbReference type="PROSITE" id="PS00829">
    <property type="entry name" value="GREAB_1"/>
    <property type="match status" value="1"/>
</dbReference>
<dbReference type="PROSITE" id="PS00830">
    <property type="entry name" value="GREAB_2"/>
    <property type="match status" value="1"/>
</dbReference>
<reference key="1">
    <citation type="journal article" date="2006" name="Nat. Biotechnol.">
        <title>The genome and transcriptomes of the anti-tumor agent Clostridium novyi-NT.</title>
        <authorList>
            <person name="Bettegowda C."/>
            <person name="Huang X."/>
            <person name="Lin J."/>
            <person name="Cheong I."/>
            <person name="Kohli M."/>
            <person name="Szabo S.A."/>
            <person name="Zhang X."/>
            <person name="Diaz L.A. Jr."/>
            <person name="Velculescu V.E."/>
            <person name="Parmigiani G."/>
            <person name="Kinzler K.W."/>
            <person name="Vogelstein B."/>
            <person name="Zhou S."/>
        </authorList>
    </citation>
    <scope>NUCLEOTIDE SEQUENCE [LARGE SCALE GENOMIC DNA]</scope>
    <source>
        <strain>NT</strain>
    </source>
</reference>
<gene>
    <name evidence="1" type="primary">greA</name>
    <name type="ordered locus">NT01CX_1045</name>
</gene>
<accession>A0PXN3</accession>
<proteinExistence type="inferred from homology"/>